<name>ANP1_PACBR</name>
<organism>
    <name type="scientific">Pachycara brachycephalum</name>
    <name type="common">Antarctic eelpout</name>
    <name type="synonym">Austrolycichthys brachycephalus</name>
    <dbReference type="NCBI Taxonomy" id="36221"/>
    <lineage>
        <taxon>Eukaryota</taxon>
        <taxon>Metazoa</taxon>
        <taxon>Chordata</taxon>
        <taxon>Craniata</taxon>
        <taxon>Vertebrata</taxon>
        <taxon>Euteleostomi</taxon>
        <taxon>Actinopterygii</taxon>
        <taxon>Neopterygii</taxon>
        <taxon>Teleostei</taxon>
        <taxon>Neoteleostei</taxon>
        <taxon>Acanthomorphata</taxon>
        <taxon>Eupercaria</taxon>
        <taxon>Perciformes</taxon>
        <taxon>Cottioidei</taxon>
        <taxon>Zoarcales</taxon>
        <taxon>Zoarcidae</taxon>
        <taxon>Lycodinae</taxon>
        <taxon>Pachycara</taxon>
    </lineage>
</organism>
<reference key="1">
    <citation type="journal article" date="1989" name="Biochim. Biophys. Acta">
        <title>Structures of antifreeze peptides from the antarctic eel pout, Austrolycicthys brachycephalus.</title>
        <authorList>
            <person name="Cheng C.-H.C."/>
            <person name="Devries A.L."/>
        </authorList>
    </citation>
    <scope>PROTEIN SEQUENCE</scope>
    <scope>SUBCELLULAR LOCATION</scope>
    <scope>TISSUE SPECIFICITY</scope>
</reference>
<proteinExistence type="evidence at protein level"/>
<keyword id="KW-0047">Antifreeze protein</keyword>
<keyword id="KW-0903">Direct protein sequencing</keyword>
<keyword id="KW-0964">Secreted</keyword>
<accession>P12100</accession>
<dbReference type="PIR" id="S04973">
    <property type="entry name" value="S04973"/>
</dbReference>
<dbReference type="SMR" id="P12100"/>
<dbReference type="GO" id="GO:0005576">
    <property type="term" value="C:extracellular region"/>
    <property type="evidence" value="ECO:0007669"/>
    <property type="project" value="UniProtKB-SubCell"/>
</dbReference>
<dbReference type="CDD" id="cd11617">
    <property type="entry name" value="Antifreeze_III"/>
    <property type="match status" value="1"/>
</dbReference>
<dbReference type="Gene3D" id="3.90.1210.10">
    <property type="entry name" value="Antifreeze-like/N-acetylneuraminic acid synthase C-terminal domain"/>
    <property type="match status" value="1"/>
</dbReference>
<dbReference type="InterPro" id="IPR006190">
    <property type="entry name" value="AFP_Neu5c_C"/>
</dbReference>
<dbReference type="InterPro" id="IPR036732">
    <property type="entry name" value="AFP_Neu5c_C_sf"/>
</dbReference>
<dbReference type="InterPro" id="IPR006013">
    <property type="entry name" value="Antifreeze_III"/>
</dbReference>
<dbReference type="InterPro" id="IPR013974">
    <property type="entry name" value="SAF"/>
</dbReference>
<dbReference type="Pfam" id="PF08666">
    <property type="entry name" value="SAF"/>
    <property type="match status" value="1"/>
</dbReference>
<dbReference type="PRINTS" id="PR00357">
    <property type="entry name" value="ANTIFREEZIII"/>
</dbReference>
<dbReference type="SMART" id="SM00858">
    <property type="entry name" value="SAF"/>
    <property type="match status" value="1"/>
</dbReference>
<dbReference type="SUPFAM" id="SSF51269">
    <property type="entry name" value="AFP III-like domain"/>
    <property type="match status" value="1"/>
</dbReference>
<dbReference type="PROSITE" id="PS50844">
    <property type="entry name" value="AFP_LIKE"/>
    <property type="match status" value="1"/>
</dbReference>
<comment type="function">
    <text evidence="1">Contributes to protect fish blood from freezing at subzero sea water temperatures. Lowers the blood freezing point. Binds to nascent ice crystals and prevents further growth (By similarity).</text>
</comment>
<comment type="subcellular location">
    <subcellularLocation>
        <location evidence="3">Secreted</location>
    </subcellularLocation>
</comment>
<comment type="tissue specificity">
    <text evidence="3">Detected in blood serum (at protein level).</text>
</comment>
<comment type="similarity">
    <text evidence="4">Belongs to the type-III AFP family.</text>
</comment>
<feature type="chain" id="PRO_0000155149" description="Ice-structuring protein AB1">
    <location>
        <begin position="1"/>
        <end position="63"/>
    </location>
</feature>
<feature type="domain" description="AFP-like" evidence="2">
    <location>
        <begin position="3"/>
        <end position="62"/>
    </location>
</feature>
<feature type="site" description="Important for ice-binding" evidence="1">
    <location>
        <position position="8"/>
    </location>
</feature>
<feature type="site" description="Important for ice-binding" evidence="1">
    <location>
        <position position="13"/>
    </location>
</feature>
<feature type="site" description="Important for ice-binding" evidence="1">
    <location>
        <position position="17"/>
    </location>
</feature>
<feature type="site" description="Important for ice-binding" evidence="1">
    <location>
        <position position="43"/>
    </location>
</feature>
<protein>
    <recommendedName>
        <fullName>Ice-structuring protein AB1</fullName>
        <shortName>ISP AB1</shortName>
    </recommendedName>
    <alternativeName>
        <fullName>Antifreeze peptide AB1</fullName>
    </alternativeName>
</protein>
<sequence length="63" mass="6846">TKSVVASQLIPINTALTPAMMKAKEVSPKGIPAEEMSKIVGMQVNRAVNLDETLMPDMVKTYQ</sequence>
<evidence type="ECO:0000250" key="1"/>
<evidence type="ECO:0000255" key="2">
    <source>
        <dbReference type="PROSITE-ProRule" id="PRU00021"/>
    </source>
</evidence>
<evidence type="ECO:0000269" key="3">
    <source>
    </source>
</evidence>
<evidence type="ECO:0000305" key="4"/>